<protein>
    <recommendedName>
        <fullName evidence="1">Succinyl-diaminopimelate desuccinylase</fullName>
        <shortName evidence="1">SDAP desuccinylase</shortName>
        <ecNumber evidence="1">3.5.1.18</ecNumber>
    </recommendedName>
    <alternativeName>
        <fullName evidence="1">N-succinyl-LL-2,6-diaminoheptanedioate amidohydrolase</fullName>
    </alternativeName>
</protein>
<dbReference type="EC" id="3.5.1.18" evidence="1"/>
<dbReference type="EMBL" id="CP000116">
    <property type="protein sequence ID" value="AAZ97224.1"/>
    <property type="molecule type" value="Genomic_DNA"/>
</dbReference>
<dbReference type="RefSeq" id="WP_011311783.1">
    <property type="nucleotide sequence ID" value="NC_007404.1"/>
</dbReference>
<dbReference type="SMR" id="Q3SJE0"/>
<dbReference type="STRING" id="292415.Tbd_1271"/>
<dbReference type="KEGG" id="tbd:Tbd_1271"/>
<dbReference type="eggNOG" id="COG0624">
    <property type="taxonomic scope" value="Bacteria"/>
</dbReference>
<dbReference type="HOGENOM" id="CLU_021802_4_0_4"/>
<dbReference type="OrthoDB" id="9809784at2"/>
<dbReference type="UniPathway" id="UPA00034">
    <property type="reaction ID" value="UER00021"/>
</dbReference>
<dbReference type="Proteomes" id="UP000008291">
    <property type="component" value="Chromosome"/>
</dbReference>
<dbReference type="GO" id="GO:0008777">
    <property type="term" value="F:acetylornithine deacetylase activity"/>
    <property type="evidence" value="ECO:0007669"/>
    <property type="project" value="TreeGrafter"/>
</dbReference>
<dbReference type="GO" id="GO:0050897">
    <property type="term" value="F:cobalt ion binding"/>
    <property type="evidence" value="ECO:0007669"/>
    <property type="project" value="UniProtKB-UniRule"/>
</dbReference>
<dbReference type="GO" id="GO:0009014">
    <property type="term" value="F:succinyl-diaminopimelate desuccinylase activity"/>
    <property type="evidence" value="ECO:0007669"/>
    <property type="project" value="UniProtKB-UniRule"/>
</dbReference>
<dbReference type="GO" id="GO:0008270">
    <property type="term" value="F:zinc ion binding"/>
    <property type="evidence" value="ECO:0007669"/>
    <property type="project" value="UniProtKB-UniRule"/>
</dbReference>
<dbReference type="GO" id="GO:0019877">
    <property type="term" value="P:diaminopimelate biosynthetic process"/>
    <property type="evidence" value="ECO:0007669"/>
    <property type="project" value="UniProtKB-UniRule"/>
</dbReference>
<dbReference type="GO" id="GO:0006526">
    <property type="term" value="P:L-arginine biosynthetic process"/>
    <property type="evidence" value="ECO:0007669"/>
    <property type="project" value="TreeGrafter"/>
</dbReference>
<dbReference type="GO" id="GO:0009089">
    <property type="term" value="P:lysine biosynthetic process via diaminopimelate"/>
    <property type="evidence" value="ECO:0007669"/>
    <property type="project" value="UniProtKB-UniRule"/>
</dbReference>
<dbReference type="CDD" id="cd03891">
    <property type="entry name" value="M20_DapE_proteobac"/>
    <property type="match status" value="1"/>
</dbReference>
<dbReference type="FunFam" id="3.30.70.360:FF:000011">
    <property type="entry name" value="Succinyl-diaminopimelate desuccinylase"/>
    <property type="match status" value="1"/>
</dbReference>
<dbReference type="FunFam" id="3.40.630.10:FF:000005">
    <property type="entry name" value="Succinyl-diaminopimelate desuccinylase"/>
    <property type="match status" value="1"/>
</dbReference>
<dbReference type="Gene3D" id="3.40.630.10">
    <property type="entry name" value="Zn peptidases"/>
    <property type="match status" value="2"/>
</dbReference>
<dbReference type="HAMAP" id="MF_01690">
    <property type="entry name" value="DapE"/>
    <property type="match status" value="1"/>
</dbReference>
<dbReference type="InterPro" id="IPR036264">
    <property type="entry name" value="Bact_exopeptidase_dim_dom"/>
</dbReference>
<dbReference type="InterPro" id="IPR005941">
    <property type="entry name" value="DapE_proteobac"/>
</dbReference>
<dbReference type="InterPro" id="IPR002933">
    <property type="entry name" value="Peptidase_M20"/>
</dbReference>
<dbReference type="InterPro" id="IPR011650">
    <property type="entry name" value="Peptidase_M20_dimer"/>
</dbReference>
<dbReference type="InterPro" id="IPR050072">
    <property type="entry name" value="Peptidase_M20A"/>
</dbReference>
<dbReference type="NCBIfam" id="TIGR01246">
    <property type="entry name" value="dapE_proteo"/>
    <property type="match status" value="1"/>
</dbReference>
<dbReference type="NCBIfam" id="NF009557">
    <property type="entry name" value="PRK13009.1"/>
    <property type="match status" value="1"/>
</dbReference>
<dbReference type="PANTHER" id="PTHR43808">
    <property type="entry name" value="ACETYLORNITHINE DEACETYLASE"/>
    <property type="match status" value="1"/>
</dbReference>
<dbReference type="PANTHER" id="PTHR43808:SF31">
    <property type="entry name" value="N-ACETYL-L-CITRULLINE DEACETYLASE"/>
    <property type="match status" value="1"/>
</dbReference>
<dbReference type="Pfam" id="PF07687">
    <property type="entry name" value="M20_dimer"/>
    <property type="match status" value="1"/>
</dbReference>
<dbReference type="Pfam" id="PF01546">
    <property type="entry name" value="Peptidase_M20"/>
    <property type="match status" value="1"/>
</dbReference>
<dbReference type="SUPFAM" id="SSF55031">
    <property type="entry name" value="Bacterial exopeptidase dimerisation domain"/>
    <property type="match status" value="1"/>
</dbReference>
<dbReference type="SUPFAM" id="SSF53187">
    <property type="entry name" value="Zn-dependent exopeptidases"/>
    <property type="match status" value="1"/>
</dbReference>
<accession>Q3SJE0</accession>
<name>DAPE_THIDA</name>
<keyword id="KW-0028">Amino-acid biosynthesis</keyword>
<keyword id="KW-0170">Cobalt</keyword>
<keyword id="KW-0220">Diaminopimelate biosynthesis</keyword>
<keyword id="KW-0378">Hydrolase</keyword>
<keyword id="KW-0457">Lysine biosynthesis</keyword>
<keyword id="KW-0479">Metal-binding</keyword>
<keyword id="KW-1185">Reference proteome</keyword>
<keyword id="KW-0862">Zinc</keyword>
<organism>
    <name type="scientific">Thiobacillus denitrificans (strain ATCC 25259 / T1)</name>
    <dbReference type="NCBI Taxonomy" id="292415"/>
    <lineage>
        <taxon>Bacteria</taxon>
        <taxon>Pseudomonadati</taxon>
        <taxon>Pseudomonadota</taxon>
        <taxon>Betaproteobacteria</taxon>
        <taxon>Nitrosomonadales</taxon>
        <taxon>Thiobacillaceae</taxon>
        <taxon>Thiobacillus</taxon>
    </lineage>
</organism>
<gene>
    <name evidence="1" type="primary">dapE</name>
    <name type="ordered locus">Tbd_1271</name>
</gene>
<proteinExistence type="inferred from homology"/>
<evidence type="ECO:0000255" key="1">
    <source>
        <dbReference type="HAMAP-Rule" id="MF_01690"/>
    </source>
</evidence>
<feature type="chain" id="PRO_0000375762" description="Succinyl-diaminopimelate desuccinylase">
    <location>
        <begin position="1"/>
        <end position="392"/>
    </location>
</feature>
<feature type="active site" evidence="1">
    <location>
        <position position="79"/>
    </location>
</feature>
<feature type="active site" description="Proton acceptor" evidence="1">
    <location>
        <position position="144"/>
    </location>
</feature>
<feature type="binding site" evidence="1">
    <location>
        <position position="77"/>
    </location>
    <ligand>
        <name>Zn(2+)</name>
        <dbReference type="ChEBI" id="CHEBI:29105"/>
        <label>1</label>
    </ligand>
</feature>
<feature type="binding site" evidence="1">
    <location>
        <position position="110"/>
    </location>
    <ligand>
        <name>Zn(2+)</name>
        <dbReference type="ChEBI" id="CHEBI:29105"/>
        <label>1</label>
    </ligand>
</feature>
<feature type="binding site" evidence="1">
    <location>
        <position position="110"/>
    </location>
    <ligand>
        <name>Zn(2+)</name>
        <dbReference type="ChEBI" id="CHEBI:29105"/>
        <label>2</label>
    </ligand>
</feature>
<feature type="binding site" evidence="1">
    <location>
        <position position="145"/>
    </location>
    <ligand>
        <name>Zn(2+)</name>
        <dbReference type="ChEBI" id="CHEBI:29105"/>
        <label>2</label>
    </ligand>
</feature>
<feature type="binding site" evidence="1">
    <location>
        <position position="173"/>
    </location>
    <ligand>
        <name>Zn(2+)</name>
        <dbReference type="ChEBI" id="CHEBI:29105"/>
        <label>1</label>
    </ligand>
</feature>
<feature type="binding site" evidence="1">
    <location>
        <position position="359"/>
    </location>
    <ligand>
        <name>Zn(2+)</name>
        <dbReference type="ChEBI" id="CHEBI:29105"/>
        <label>2</label>
    </ligand>
</feature>
<comment type="function">
    <text evidence="1">Catalyzes the hydrolysis of N-succinyl-L,L-diaminopimelic acid (SDAP), forming succinate and LL-2,6-diaminopimelate (DAP), an intermediate involved in the bacterial biosynthesis of lysine and meso-diaminopimelic acid, an essential component of bacterial cell walls.</text>
</comment>
<comment type="catalytic activity">
    <reaction evidence="1">
        <text>N-succinyl-(2S,6S)-2,6-diaminopimelate + H2O = (2S,6S)-2,6-diaminopimelate + succinate</text>
        <dbReference type="Rhea" id="RHEA:22608"/>
        <dbReference type="ChEBI" id="CHEBI:15377"/>
        <dbReference type="ChEBI" id="CHEBI:30031"/>
        <dbReference type="ChEBI" id="CHEBI:57609"/>
        <dbReference type="ChEBI" id="CHEBI:58087"/>
        <dbReference type="EC" id="3.5.1.18"/>
    </reaction>
</comment>
<comment type="cofactor">
    <cofactor evidence="1">
        <name>Zn(2+)</name>
        <dbReference type="ChEBI" id="CHEBI:29105"/>
    </cofactor>
    <cofactor evidence="1">
        <name>Co(2+)</name>
        <dbReference type="ChEBI" id="CHEBI:48828"/>
    </cofactor>
    <text evidence="1">Binds 2 Zn(2+) or Co(2+) ions per subunit.</text>
</comment>
<comment type="pathway">
    <text evidence="1">Amino-acid biosynthesis; L-lysine biosynthesis via DAP pathway; LL-2,6-diaminopimelate from (S)-tetrahydrodipicolinate (succinylase route): step 3/3.</text>
</comment>
<comment type="subunit">
    <text evidence="1">Homodimer.</text>
</comment>
<comment type="similarity">
    <text evidence="1">Belongs to the peptidase M20A family. DapE subfamily.</text>
</comment>
<sequence length="392" mass="42539">MANETLEDAVLASETLALAVELLKRRSVTPDDAGCHDLIAARLQALGFHIERHRHNDVDNLWARRGTASPVVCFAGHTDVVPPGPLEQWLSDPFEPTLRDGKLYARGAADMKTSDAAFVTATERFLARRPDHPGSIAFLLTSDEEGPATDGTVRVVEALKARGELLDYCIVGEPTSAAEFGDTIKNGRRGSLSGTLRVKGVQGHIAYPHLAKNPIHLAAPAIAELAETMWDEGNSYFPPTTWQISNIHAGTGVTNVIPGMVEIQFNFRFSTASTAEGLMDAVNEILDSHGLDYEIDWNLSGKPFLTPRGALCDRLSEAVHEVTGLTPELSTTGGTSDGRFIADICREVVEFGPLNMSIHKLNEHVALENVEQLAAVYEKALEKLLGESDERV</sequence>
<reference key="1">
    <citation type="journal article" date="2006" name="J. Bacteriol.">
        <title>The genome sequence of the obligately chemolithoautotrophic, facultatively anaerobic bacterium Thiobacillus denitrificans.</title>
        <authorList>
            <person name="Beller H.R."/>
            <person name="Chain P.S."/>
            <person name="Letain T.E."/>
            <person name="Chakicherla A."/>
            <person name="Larimer F.W."/>
            <person name="Richardson P.M."/>
            <person name="Coleman M.A."/>
            <person name="Wood A.P."/>
            <person name="Kelly D.P."/>
        </authorList>
    </citation>
    <scope>NUCLEOTIDE SEQUENCE [LARGE SCALE GENOMIC DNA]</scope>
    <source>
        <strain>ATCC 25259 / T1</strain>
    </source>
</reference>